<feature type="chain" id="PRO_1000143075" description="Small ribosomal subunit protein uS15">
    <location>
        <begin position="1"/>
        <end position="89"/>
    </location>
</feature>
<name>RS15_BACC4</name>
<proteinExistence type="inferred from homology"/>
<reference key="1">
    <citation type="submission" date="2008-10" db="EMBL/GenBank/DDBJ databases">
        <title>Genome sequence of Bacillus cereus B4264.</title>
        <authorList>
            <person name="Dodson R.J."/>
            <person name="Durkin A.S."/>
            <person name="Rosovitz M.J."/>
            <person name="Rasko D.A."/>
            <person name="Hoffmaster A."/>
            <person name="Ravel J."/>
            <person name="Sutton G."/>
        </authorList>
    </citation>
    <scope>NUCLEOTIDE SEQUENCE [LARGE SCALE GENOMIC DNA]</scope>
    <source>
        <strain>B4264</strain>
    </source>
</reference>
<dbReference type="EMBL" id="CP001176">
    <property type="protein sequence ID" value="ACK61822.1"/>
    <property type="molecule type" value="Genomic_DNA"/>
</dbReference>
<dbReference type="RefSeq" id="WP_001229392.1">
    <property type="nucleotide sequence ID" value="NZ_VEHB01000002.1"/>
</dbReference>
<dbReference type="SMR" id="B7HDT1"/>
<dbReference type="GeneID" id="93007304"/>
<dbReference type="KEGG" id="bcb:BCB4264_A3906"/>
<dbReference type="HOGENOM" id="CLU_148518_0_0_9"/>
<dbReference type="Proteomes" id="UP000007096">
    <property type="component" value="Chromosome"/>
</dbReference>
<dbReference type="GO" id="GO:0022627">
    <property type="term" value="C:cytosolic small ribosomal subunit"/>
    <property type="evidence" value="ECO:0007669"/>
    <property type="project" value="TreeGrafter"/>
</dbReference>
<dbReference type="GO" id="GO:0019843">
    <property type="term" value="F:rRNA binding"/>
    <property type="evidence" value="ECO:0007669"/>
    <property type="project" value="UniProtKB-UniRule"/>
</dbReference>
<dbReference type="GO" id="GO:0003735">
    <property type="term" value="F:structural constituent of ribosome"/>
    <property type="evidence" value="ECO:0007669"/>
    <property type="project" value="InterPro"/>
</dbReference>
<dbReference type="GO" id="GO:0006412">
    <property type="term" value="P:translation"/>
    <property type="evidence" value="ECO:0007669"/>
    <property type="project" value="UniProtKB-UniRule"/>
</dbReference>
<dbReference type="CDD" id="cd00353">
    <property type="entry name" value="Ribosomal_S15p_S13e"/>
    <property type="match status" value="1"/>
</dbReference>
<dbReference type="FunFam" id="1.10.287.10:FF:000002">
    <property type="entry name" value="30S ribosomal protein S15"/>
    <property type="match status" value="1"/>
</dbReference>
<dbReference type="Gene3D" id="6.10.250.3130">
    <property type="match status" value="1"/>
</dbReference>
<dbReference type="Gene3D" id="1.10.287.10">
    <property type="entry name" value="S15/NS1, RNA-binding"/>
    <property type="match status" value="1"/>
</dbReference>
<dbReference type="HAMAP" id="MF_01343_B">
    <property type="entry name" value="Ribosomal_uS15_B"/>
    <property type="match status" value="1"/>
</dbReference>
<dbReference type="InterPro" id="IPR000589">
    <property type="entry name" value="Ribosomal_uS15"/>
</dbReference>
<dbReference type="InterPro" id="IPR005290">
    <property type="entry name" value="Ribosomal_uS15_bac-type"/>
</dbReference>
<dbReference type="InterPro" id="IPR009068">
    <property type="entry name" value="uS15_NS1_RNA-bd_sf"/>
</dbReference>
<dbReference type="NCBIfam" id="TIGR00952">
    <property type="entry name" value="S15_bact"/>
    <property type="match status" value="1"/>
</dbReference>
<dbReference type="PANTHER" id="PTHR23321">
    <property type="entry name" value="RIBOSOMAL PROTEIN S15, BACTERIAL AND ORGANELLAR"/>
    <property type="match status" value="1"/>
</dbReference>
<dbReference type="PANTHER" id="PTHR23321:SF26">
    <property type="entry name" value="SMALL RIBOSOMAL SUBUNIT PROTEIN US15M"/>
    <property type="match status" value="1"/>
</dbReference>
<dbReference type="Pfam" id="PF00312">
    <property type="entry name" value="Ribosomal_S15"/>
    <property type="match status" value="1"/>
</dbReference>
<dbReference type="SMART" id="SM01387">
    <property type="entry name" value="Ribosomal_S15"/>
    <property type="match status" value="1"/>
</dbReference>
<dbReference type="SUPFAM" id="SSF47060">
    <property type="entry name" value="S15/NS1 RNA-binding domain"/>
    <property type="match status" value="1"/>
</dbReference>
<dbReference type="PROSITE" id="PS00362">
    <property type="entry name" value="RIBOSOMAL_S15"/>
    <property type="match status" value="1"/>
</dbReference>
<comment type="function">
    <text evidence="1">One of the primary rRNA binding proteins, it binds directly to 16S rRNA where it helps nucleate assembly of the platform of the 30S subunit by binding and bridging several RNA helices of the 16S rRNA.</text>
</comment>
<comment type="function">
    <text evidence="1">Forms an intersubunit bridge (bridge B4) with the 23S rRNA of the 50S subunit in the ribosome.</text>
</comment>
<comment type="subunit">
    <text evidence="1">Part of the 30S ribosomal subunit. Forms a bridge to the 50S subunit in the 70S ribosome, contacting the 23S rRNA.</text>
</comment>
<comment type="similarity">
    <text evidence="1">Belongs to the universal ribosomal protein uS15 family.</text>
</comment>
<organism>
    <name type="scientific">Bacillus cereus (strain B4264)</name>
    <dbReference type="NCBI Taxonomy" id="405532"/>
    <lineage>
        <taxon>Bacteria</taxon>
        <taxon>Bacillati</taxon>
        <taxon>Bacillota</taxon>
        <taxon>Bacilli</taxon>
        <taxon>Bacillales</taxon>
        <taxon>Bacillaceae</taxon>
        <taxon>Bacillus</taxon>
        <taxon>Bacillus cereus group</taxon>
    </lineage>
</organism>
<accession>B7HDT1</accession>
<gene>
    <name evidence="1" type="primary">rpsO</name>
    <name type="ordered locus">BCB4264_A3906</name>
</gene>
<keyword id="KW-0687">Ribonucleoprotein</keyword>
<keyword id="KW-0689">Ribosomal protein</keyword>
<keyword id="KW-0694">RNA-binding</keyword>
<keyword id="KW-0699">rRNA-binding</keyword>
<evidence type="ECO:0000255" key="1">
    <source>
        <dbReference type="HAMAP-Rule" id="MF_01343"/>
    </source>
</evidence>
<evidence type="ECO:0000305" key="2"/>
<sequence length="89" mass="10560">MALTQERKNEIIAQFRTHETDTGSPEVQIAVLTEQINTLNEHLRTHKKDHHSRRGLLKMVGKRRNLLTYLRNSDITRYRELITKLGLRR</sequence>
<protein>
    <recommendedName>
        <fullName evidence="1">Small ribosomal subunit protein uS15</fullName>
    </recommendedName>
    <alternativeName>
        <fullName evidence="2">30S ribosomal protein S15</fullName>
    </alternativeName>
</protein>